<name>LSPA_FRATM</name>
<feature type="chain" id="PRO_1000097256" description="Lipoprotein signal peptidase">
    <location>
        <begin position="1"/>
        <end position="161"/>
    </location>
</feature>
<feature type="transmembrane region" description="Helical" evidence="1">
    <location>
        <begin position="8"/>
        <end position="28"/>
    </location>
</feature>
<feature type="transmembrane region" description="Helical" evidence="1">
    <location>
        <begin position="40"/>
        <end position="60"/>
    </location>
</feature>
<feature type="transmembrane region" description="Helical" evidence="1">
    <location>
        <begin position="67"/>
        <end position="87"/>
    </location>
</feature>
<feature type="transmembrane region" description="Helical" evidence="1">
    <location>
        <begin position="91"/>
        <end position="111"/>
    </location>
</feature>
<feature type="transmembrane region" description="Helical" evidence="1">
    <location>
        <begin position="136"/>
        <end position="156"/>
    </location>
</feature>
<feature type="active site" evidence="1">
    <location>
        <position position="122"/>
    </location>
</feature>
<feature type="active site" evidence="1">
    <location>
        <position position="140"/>
    </location>
</feature>
<accession>B2SF87</accession>
<comment type="function">
    <text evidence="1">This protein specifically catalyzes the removal of signal peptides from prolipoproteins.</text>
</comment>
<comment type="catalytic activity">
    <reaction evidence="1">
        <text>Release of signal peptides from bacterial membrane prolipoproteins. Hydrolyzes -Xaa-Yaa-Zaa-|-(S,diacylglyceryl)Cys-, in which Xaa is hydrophobic (preferably Leu), and Yaa (Ala or Ser) and Zaa (Gly or Ala) have small, neutral side chains.</text>
        <dbReference type="EC" id="3.4.23.36"/>
    </reaction>
</comment>
<comment type="pathway">
    <text evidence="1">Protein modification; lipoprotein biosynthesis (signal peptide cleavage).</text>
</comment>
<comment type="subcellular location">
    <subcellularLocation>
        <location evidence="1">Cell inner membrane</location>
        <topology evidence="1">Multi-pass membrane protein</topology>
    </subcellularLocation>
</comment>
<comment type="similarity">
    <text evidence="1">Belongs to the peptidase A8 family.</text>
</comment>
<dbReference type="EC" id="3.4.23.36" evidence="1"/>
<dbReference type="EMBL" id="CP000915">
    <property type="protein sequence ID" value="ACD30519.1"/>
    <property type="molecule type" value="Genomic_DNA"/>
</dbReference>
<dbReference type="SMR" id="B2SF87"/>
<dbReference type="KEGG" id="ftm:FTM_0502"/>
<dbReference type="HOGENOM" id="CLU_083252_4_0_6"/>
<dbReference type="UniPathway" id="UPA00665"/>
<dbReference type="GO" id="GO:0005886">
    <property type="term" value="C:plasma membrane"/>
    <property type="evidence" value="ECO:0007669"/>
    <property type="project" value="UniProtKB-SubCell"/>
</dbReference>
<dbReference type="GO" id="GO:0004190">
    <property type="term" value="F:aspartic-type endopeptidase activity"/>
    <property type="evidence" value="ECO:0007669"/>
    <property type="project" value="UniProtKB-UniRule"/>
</dbReference>
<dbReference type="GO" id="GO:0006508">
    <property type="term" value="P:proteolysis"/>
    <property type="evidence" value="ECO:0007669"/>
    <property type="project" value="UniProtKB-KW"/>
</dbReference>
<dbReference type="HAMAP" id="MF_00161">
    <property type="entry name" value="LspA"/>
    <property type="match status" value="1"/>
</dbReference>
<dbReference type="InterPro" id="IPR001872">
    <property type="entry name" value="Peptidase_A8"/>
</dbReference>
<dbReference type="NCBIfam" id="TIGR00077">
    <property type="entry name" value="lspA"/>
    <property type="match status" value="1"/>
</dbReference>
<dbReference type="PANTHER" id="PTHR33695">
    <property type="entry name" value="LIPOPROTEIN SIGNAL PEPTIDASE"/>
    <property type="match status" value="1"/>
</dbReference>
<dbReference type="PANTHER" id="PTHR33695:SF1">
    <property type="entry name" value="LIPOPROTEIN SIGNAL PEPTIDASE"/>
    <property type="match status" value="1"/>
</dbReference>
<dbReference type="Pfam" id="PF01252">
    <property type="entry name" value="Peptidase_A8"/>
    <property type="match status" value="1"/>
</dbReference>
<dbReference type="PRINTS" id="PR00781">
    <property type="entry name" value="LIPOSIGPTASE"/>
</dbReference>
<dbReference type="PROSITE" id="PS00855">
    <property type="entry name" value="SPASE_II"/>
    <property type="match status" value="1"/>
</dbReference>
<protein>
    <recommendedName>
        <fullName evidence="1">Lipoprotein signal peptidase</fullName>
        <ecNumber evidence="1">3.4.23.36</ecNumber>
    </recommendedName>
    <alternativeName>
        <fullName evidence="1">Prolipoprotein signal peptidase</fullName>
    </alternativeName>
    <alternativeName>
        <fullName evidence="1">Signal peptidase II</fullName>
        <shortName evidence="1">SPase II</shortName>
    </alternativeName>
</protein>
<organism>
    <name type="scientific">Francisella tularensis subsp. mediasiatica (strain FSC147)</name>
    <dbReference type="NCBI Taxonomy" id="441952"/>
    <lineage>
        <taxon>Bacteria</taxon>
        <taxon>Pseudomonadati</taxon>
        <taxon>Pseudomonadota</taxon>
        <taxon>Gammaproteobacteria</taxon>
        <taxon>Thiotrichales</taxon>
        <taxon>Francisellaceae</taxon>
        <taxon>Francisella</taxon>
    </lineage>
</organism>
<reference key="1">
    <citation type="journal article" date="2009" name="PLoS Pathog.">
        <title>Molecular evolutionary consequences of niche restriction in Francisella tularensis, a facultative intracellular pathogen.</title>
        <authorList>
            <person name="Larsson P."/>
            <person name="Elfsmark D."/>
            <person name="Svensson K."/>
            <person name="Wikstroem P."/>
            <person name="Forsman M."/>
            <person name="Brettin T."/>
            <person name="Keim P."/>
            <person name="Johansson A."/>
        </authorList>
    </citation>
    <scope>NUCLEOTIDE SEQUENCE [LARGE SCALE GENOMIC DNA]</scope>
    <source>
        <strain>FSC147</strain>
    </source>
</reference>
<gene>
    <name evidence="1" type="primary">lspA</name>
    <name type="ordered locus">FTM_0502</name>
</gene>
<evidence type="ECO:0000255" key="1">
    <source>
        <dbReference type="HAMAP-Rule" id="MF_00161"/>
    </source>
</evidence>
<proteinExistence type="inferred from homology"/>
<sequence length="161" mass="18181">MNLLRPKLKYFILAILIIAADLYTKYLANTYLEFAQSLKITSFFNLTLLYNHGAAFSLLSNDQTSWQMIMFSTISLIAAIVLIYLIIKQPITEKINLFSFALILGGALGNFYDRAFQGYVIDFLDFHIGNYHWPSFNIADSAITCGVVILIAASLFTKKKS</sequence>
<keyword id="KW-0064">Aspartyl protease</keyword>
<keyword id="KW-0997">Cell inner membrane</keyword>
<keyword id="KW-1003">Cell membrane</keyword>
<keyword id="KW-0378">Hydrolase</keyword>
<keyword id="KW-0472">Membrane</keyword>
<keyword id="KW-0645">Protease</keyword>
<keyword id="KW-0812">Transmembrane</keyword>
<keyword id="KW-1133">Transmembrane helix</keyword>